<comment type="function">
    <text evidence="2 4">Pore-forming protein, which is involved in efflux of copper across the outer membrane. Essential for copper resistance and maintenance of a low intracellular copper concentration. Required for virulence.</text>
</comment>
<comment type="subcellular location">
    <subcellularLocation>
        <location evidence="2 3">Cell outer membrane</location>
    </subcellularLocation>
</comment>
<comment type="disruption phenotype">
    <text evidence="4">Mutants show a severe growth defect in the presence of copper. Deletion causes a drastic virulence defect in guinea pigs, mostly due to a much lower bacterial burden in the lungs.</text>
</comment>
<comment type="similarity">
    <text evidence="5">Belongs to the MctB (TC 1.B.50) family.</text>
</comment>
<protein>
    <recommendedName>
        <fullName>Copper transporter MctB</fullName>
    </recommendedName>
    <alternativeName>
        <fullName>Mycobacterial copper transport protein B</fullName>
    </alternativeName>
</protein>
<reference key="1">
    <citation type="journal article" date="1998" name="Nature">
        <title>Deciphering the biology of Mycobacterium tuberculosis from the complete genome sequence.</title>
        <authorList>
            <person name="Cole S.T."/>
            <person name="Brosch R."/>
            <person name="Parkhill J."/>
            <person name="Garnier T."/>
            <person name="Churcher C.M."/>
            <person name="Harris D.E."/>
            <person name="Gordon S.V."/>
            <person name="Eiglmeier K."/>
            <person name="Gas S."/>
            <person name="Barry C.E. III"/>
            <person name="Tekaia F."/>
            <person name="Badcock K."/>
            <person name="Basham D."/>
            <person name="Brown D."/>
            <person name="Chillingworth T."/>
            <person name="Connor R."/>
            <person name="Davies R.M."/>
            <person name="Devlin K."/>
            <person name="Feltwell T."/>
            <person name="Gentles S."/>
            <person name="Hamlin N."/>
            <person name="Holroyd S."/>
            <person name="Hornsby T."/>
            <person name="Jagels K."/>
            <person name="Krogh A."/>
            <person name="McLean J."/>
            <person name="Moule S."/>
            <person name="Murphy L.D."/>
            <person name="Oliver S."/>
            <person name="Osborne J."/>
            <person name="Quail M.A."/>
            <person name="Rajandream M.A."/>
            <person name="Rogers J."/>
            <person name="Rutter S."/>
            <person name="Seeger K."/>
            <person name="Skelton S."/>
            <person name="Squares S."/>
            <person name="Squares R."/>
            <person name="Sulston J.E."/>
            <person name="Taylor K."/>
            <person name="Whitehead S."/>
            <person name="Barrell B.G."/>
        </authorList>
    </citation>
    <scope>NUCLEOTIDE SEQUENCE [LARGE SCALE GENOMIC DNA]</scope>
    <source>
        <strain>ATCC 25618 / H37Rv</strain>
    </source>
</reference>
<reference key="2">
    <citation type="journal article" date="2008" name="J. Biol. Chem.">
        <title>Rv1698 of Mycobacterium tuberculosis represents a new class of channel-forming outer membrane proteins.</title>
        <authorList>
            <person name="Siroy A."/>
            <person name="Mailaender C."/>
            <person name="Harder D."/>
            <person name="Koerber S."/>
            <person name="Wolschendorf F."/>
            <person name="Danilchanka O."/>
            <person name="Wang Y."/>
            <person name="Heinz C."/>
            <person name="Niederweis M."/>
        </authorList>
    </citation>
    <scope>SUBCELLULAR LOCATION</scope>
    <scope>FUNCTION</scope>
    <source>
        <strain>ATCC 25618 / H37Rv</strain>
    </source>
</reference>
<reference key="3">
    <citation type="journal article" date="2008" name="Tuberculosis">
        <title>Identification of outer membrane proteins of Mycobacterium tuberculosis.</title>
        <authorList>
            <person name="Song H."/>
            <person name="Sandie R."/>
            <person name="Wang Y."/>
            <person name="Andrade-Navarro M.A."/>
            <person name="Niederweis M."/>
        </authorList>
    </citation>
    <scope>SUBCELLULAR LOCATION</scope>
    <source>
        <strain>ATCC 25618 / H37Rv</strain>
    </source>
</reference>
<reference key="4">
    <citation type="journal article" date="2011" name="Mol. Cell. Proteomics">
        <title>Proteogenomic analysis of Mycobacterium tuberculosis by high resolution mass spectrometry.</title>
        <authorList>
            <person name="Kelkar D.S."/>
            <person name="Kumar D."/>
            <person name="Kumar P."/>
            <person name="Balakrishnan L."/>
            <person name="Muthusamy B."/>
            <person name="Yadav A.K."/>
            <person name="Shrivastava P."/>
            <person name="Marimuthu A."/>
            <person name="Anand S."/>
            <person name="Sundaram H."/>
            <person name="Kingsbury R."/>
            <person name="Harsha H.C."/>
            <person name="Nair B."/>
            <person name="Prasad T.S."/>
            <person name="Chauhan D.S."/>
            <person name="Katoch K."/>
            <person name="Katoch V.M."/>
            <person name="Kumar P."/>
            <person name="Chaerkady R."/>
            <person name="Ramachandran S."/>
            <person name="Dash D."/>
            <person name="Pandey A."/>
        </authorList>
    </citation>
    <scope>IDENTIFICATION BY MASS SPECTROMETRY [LARGE SCALE ANALYSIS]</scope>
    <source>
        <strain>ATCC 25618 / H37Rv</strain>
    </source>
</reference>
<reference key="5">
    <citation type="journal article" date="2011" name="Proc. Natl. Acad. Sci. U.S.A.">
        <title>Copper resistance is essential for virulence of Mycobacterium tuberculosis.</title>
        <authorList>
            <person name="Wolschendorf F."/>
            <person name="Ackart D."/>
            <person name="Shrestha T.B."/>
            <person name="Hascall-Dove L."/>
            <person name="Nolan S."/>
            <person name="Lamichhane G."/>
            <person name="Wang Y."/>
            <person name="Bossmann S.H."/>
            <person name="Basaraba R.J."/>
            <person name="Niederweis M."/>
        </authorList>
    </citation>
    <scope>FUNCTION</scope>
    <scope>DISRUPTION PHENOTYPE</scope>
    <scope>GENE NAME</scope>
    <source>
        <strain>ATCC 25618 / H37Rv</strain>
    </source>
</reference>
<reference key="6">
    <citation type="journal article" date="2010" name="Acta Crystallogr. F">
        <title>Cloning, expression, purification, crystallization and preliminary crystallographic analysis of Rv1698, an outer membrane channel protein from Mycobacterium tuberculosis.</title>
        <authorList>
            <person name="Chen L."/>
            <person name="Sun D."/>
            <person name="Wu M."/>
            <person name="Zang J."/>
            <person name="Tian C."/>
        </authorList>
    </citation>
    <scope>CRYSTALLIZATION</scope>
</reference>
<name>MCTB_MYCTU</name>
<keyword id="KW-0998">Cell outer membrane</keyword>
<keyword id="KW-0186">Copper</keyword>
<keyword id="KW-0406">Ion transport</keyword>
<keyword id="KW-0472">Membrane</keyword>
<keyword id="KW-0626">Porin</keyword>
<keyword id="KW-1185">Reference proteome</keyword>
<keyword id="KW-0732">Signal</keyword>
<keyword id="KW-0812">Transmembrane</keyword>
<keyword id="KW-0813">Transport</keyword>
<feature type="signal peptide" evidence="1">
    <location>
        <begin position="1"/>
        <end position="30"/>
    </location>
</feature>
<feature type="chain" id="PRO_0000014105" description="Copper transporter MctB">
    <location>
        <begin position="31"/>
        <end position="314"/>
    </location>
</feature>
<proteinExistence type="evidence at protein level"/>
<sequence length="314" mass="32391">MISLRQHAVSLAAVFLALAMGVVLGSGFFSDTLLSSLRSEKRDLYTQIDRLTDQRDALREKLSAADNFDIQVGSRIVHDALVGKSVVIFRTPDAHDDDIAAVSKIVGQAGGAVTATVSLTQEFVEANSAEKLRSVVNSSILPAGSQLSTKLVDQGSQAGDLLGIALLSNADPAAPTVEQAQRDTVLAALRETGFITYQPRDRIGTANATVVVTGGALSTDAGNQGVSVARFAAALAPRGSGTLLAGRDGSANRPAAVAVTRADADMAAEISTVDDIDAEPGRITVILALHDLINGGHVGHYGTGHGAMSVTVSQ</sequence>
<accession>P9WJ83</accession>
<accession>L0TAD1</accession>
<accession>P58212</accession>
<accession>P64883</accession>
<dbReference type="EMBL" id="AL123456">
    <property type="protein sequence ID" value="CCP44463.1"/>
    <property type="molecule type" value="Genomic_DNA"/>
</dbReference>
<dbReference type="PIR" id="A70503">
    <property type="entry name" value="A70503"/>
</dbReference>
<dbReference type="RefSeq" id="NP_216214.1">
    <property type="nucleotide sequence ID" value="NC_000962.3"/>
</dbReference>
<dbReference type="RefSeq" id="WP_003408390.1">
    <property type="nucleotide sequence ID" value="NZ_NVQJ01000010.1"/>
</dbReference>
<dbReference type="SMR" id="P9WJ83"/>
<dbReference type="STRING" id="83332.Rv1698"/>
<dbReference type="PaxDb" id="83332-Rv1698"/>
<dbReference type="DNASU" id="885047"/>
<dbReference type="GeneID" id="885047"/>
<dbReference type="KEGG" id="mtu:Rv1698"/>
<dbReference type="KEGG" id="mtv:RVBD_1698"/>
<dbReference type="TubercuList" id="Rv1698"/>
<dbReference type="eggNOG" id="ENOG5032TBA">
    <property type="taxonomic scope" value="Bacteria"/>
</dbReference>
<dbReference type="InParanoid" id="P9WJ83"/>
<dbReference type="OrthoDB" id="4350157at2"/>
<dbReference type="Proteomes" id="UP000001584">
    <property type="component" value="Chromosome"/>
</dbReference>
<dbReference type="GO" id="GO:0009279">
    <property type="term" value="C:cell outer membrane"/>
    <property type="evidence" value="ECO:0000314"/>
    <property type="project" value="MTBBASE"/>
</dbReference>
<dbReference type="GO" id="GO:0046930">
    <property type="term" value="C:pore complex"/>
    <property type="evidence" value="ECO:0000315"/>
    <property type="project" value="MTBBASE"/>
</dbReference>
<dbReference type="GO" id="GO:0015288">
    <property type="term" value="F:porin activity"/>
    <property type="evidence" value="ECO:0000314"/>
    <property type="project" value="MTBBASE"/>
</dbReference>
<dbReference type="GO" id="GO:0055070">
    <property type="term" value="P:copper ion homeostasis"/>
    <property type="evidence" value="ECO:0007669"/>
    <property type="project" value="InterPro"/>
</dbReference>
<dbReference type="GO" id="GO:0006811">
    <property type="term" value="P:monoatomic ion transport"/>
    <property type="evidence" value="ECO:0000314"/>
    <property type="project" value="MTBBASE"/>
</dbReference>
<dbReference type="InterPro" id="IPR021522">
    <property type="entry name" value="MctB"/>
</dbReference>
<dbReference type="Pfam" id="PF11382">
    <property type="entry name" value="MctB"/>
    <property type="match status" value="1"/>
</dbReference>
<gene>
    <name type="primary">mctB</name>
    <name type="ordered locus">Rv1698</name>
    <name type="ORF">MTCI125.20</name>
</gene>
<evidence type="ECO:0000255" key="1"/>
<evidence type="ECO:0000269" key="2">
    <source>
    </source>
</evidence>
<evidence type="ECO:0000269" key="3">
    <source>
    </source>
</evidence>
<evidence type="ECO:0000269" key="4">
    <source>
    </source>
</evidence>
<evidence type="ECO:0000305" key="5"/>
<organism>
    <name type="scientific">Mycobacterium tuberculosis (strain ATCC 25618 / H37Rv)</name>
    <dbReference type="NCBI Taxonomy" id="83332"/>
    <lineage>
        <taxon>Bacteria</taxon>
        <taxon>Bacillati</taxon>
        <taxon>Actinomycetota</taxon>
        <taxon>Actinomycetes</taxon>
        <taxon>Mycobacteriales</taxon>
        <taxon>Mycobacteriaceae</taxon>
        <taxon>Mycobacterium</taxon>
        <taxon>Mycobacterium tuberculosis complex</taxon>
    </lineage>
</organism>